<comment type="function">
    <text evidence="1">Plays a critical role in the incorporation of lipoproteins in the outer membrane after they are released by the LolA protein.</text>
</comment>
<comment type="subunit">
    <text evidence="1">Monomer.</text>
</comment>
<comment type="subcellular location">
    <subcellularLocation>
        <location evidence="1">Cell outer membrane</location>
        <topology evidence="1">Lipid-anchor</topology>
    </subcellularLocation>
</comment>
<comment type="similarity">
    <text evidence="1">Belongs to the LolB family.</text>
</comment>
<protein>
    <recommendedName>
        <fullName evidence="1">Outer-membrane lipoprotein LolB</fullName>
    </recommendedName>
</protein>
<name>LOLB_GLAP5</name>
<feature type="signal peptide" evidence="1">
    <location>
        <begin position="1"/>
        <end position="18"/>
    </location>
</feature>
<feature type="chain" id="PRO_1000190861" description="Outer-membrane lipoprotein LolB">
    <location>
        <begin position="19"/>
        <end position="210"/>
    </location>
</feature>
<feature type="lipid moiety-binding region" description="N-palmitoyl cysteine" evidence="1">
    <location>
        <position position="19"/>
    </location>
</feature>
<feature type="lipid moiety-binding region" description="S-diacylglycerol cysteine" evidence="1">
    <location>
        <position position="19"/>
    </location>
</feature>
<evidence type="ECO:0000255" key="1">
    <source>
        <dbReference type="HAMAP-Rule" id="MF_00233"/>
    </source>
</evidence>
<sequence>MKKLTKLLSLTLLFALAGCHSVLDAPTEITQPSVTIPHNDAKWQQHLAQLTQINAYSAKGQFGYISPEERFSSHFDWQYKTPTNFGLTMSSNLSSKSLKLQRNVYGMTISDSEGRSRTEADVAMLMEEIIGVSFPIDQFAYWVKGQPEQQSNYVVNEKRQLAQFDYAVNGTLWKVRFVEYHEDRQPNLPKLIVLENGSQTLKIRIDHWAY</sequence>
<gene>
    <name evidence="1" type="primary">lolB</name>
    <name type="ordered locus">HAPS_2037</name>
</gene>
<dbReference type="EMBL" id="CP001321">
    <property type="protein sequence ID" value="ACL33497.1"/>
    <property type="molecule type" value="Genomic_DNA"/>
</dbReference>
<dbReference type="RefSeq" id="WP_015940037.1">
    <property type="nucleotide sequence ID" value="NC_011852.1"/>
</dbReference>
<dbReference type="SMR" id="B8F845"/>
<dbReference type="STRING" id="557723.HAPS_2037"/>
<dbReference type="KEGG" id="hap:HAPS_2037"/>
<dbReference type="PATRIC" id="fig|557723.8.peg.2021"/>
<dbReference type="HOGENOM" id="CLU_092816_1_1_6"/>
<dbReference type="Proteomes" id="UP000006743">
    <property type="component" value="Chromosome"/>
</dbReference>
<dbReference type="GO" id="GO:0009279">
    <property type="term" value="C:cell outer membrane"/>
    <property type="evidence" value="ECO:0007669"/>
    <property type="project" value="UniProtKB-SubCell"/>
</dbReference>
<dbReference type="GO" id="GO:0044874">
    <property type="term" value="P:lipoprotein localization to outer membrane"/>
    <property type="evidence" value="ECO:0007669"/>
    <property type="project" value="UniProtKB-UniRule"/>
</dbReference>
<dbReference type="GO" id="GO:0015031">
    <property type="term" value="P:protein transport"/>
    <property type="evidence" value="ECO:0007669"/>
    <property type="project" value="UniProtKB-KW"/>
</dbReference>
<dbReference type="CDD" id="cd16326">
    <property type="entry name" value="LolB"/>
    <property type="match status" value="1"/>
</dbReference>
<dbReference type="Gene3D" id="2.50.20.10">
    <property type="entry name" value="Lipoprotein localisation LolA/LolB/LppX"/>
    <property type="match status" value="1"/>
</dbReference>
<dbReference type="HAMAP" id="MF_00233">
    <property type="entry name" value="LolB"/>
    <property type="match status" value="1"/>
</dbReference>
<dbReference type="InterPro" id="IPR029046">
    <property type="entry name" value="LolA/LolB/LppX"/>
</dbReference>
<dbReference type="InterPro" id="IPR004565">
    <property type="entry name" value="OM_lipoprot_LolB"/>
</dbReference>
<dbReference type="NCBIfam" id="TIGR00548">
    <property type="entry name" value="lolB"/>
    <property type="match status" value="1"/>
</dbReference>
<dbReference type="Pfam" id="PF03550">
    <property type="entry name" value="LolB"/>
    <property type="match status" value="1"/>
</dbReference>
<dbReference type="SUPFAM" id="SSF89392">
    <property type="entry name" value="Prokaryotic lipoproteins and lipoprotein localization factors"/>
    <property type="match status" value="1"/>
</dbReference>
<dbReference type="PROSITE" id="PS51257">
    <property type="entry name" value="PROKAR_LIPOPROTEIN"/>
    <property type="match status" value="1"/>
</dbReference>
<reference key="1">
    <citation type="journal article" date="2009" name="J. Bacteriol.">
        <title>Complete genome sequence of Haemophilus parasuis SH0165.</title>
        <authorList>
            <person name="Yue M."/>
            <person name="Yang F."/>
            <person name="Yang J."/>
            <person name="Bei W."/>
            <person name="Cai X."/>
            <person name="Chen L."/>
            <person name="Dong J."/>
            <person name="Zhou R."/>
            <person name="Jin M."/>
            <person name="Jin Q."/>
            <person name="Chen H."/>
        </authorList>
    </citation>
    <scope>NUCLEOTIDE SEQUENCE [LARGE SCALE GENOMIC DNA]</scope>
    <source>
        <strain>SH0165</strain>
    </source>
</reference>
<organism>
    <name type="scientific">Glaesserella parasuis serovar 5 (strain SH0165)</name>
    <name type="common">Haemophilus parasuis</name>
    <dbReference type="NCBI Taxonomy" id="557723"/>
    <lineage>
        <taxon>Bacteria</taxon>
        <taxon>Pseudomonadati</taxon>
        <taxon>Pseudomonadota</taxon>
        <taxon>Gammaproteobacteria</taxon>
        <taxon>Pasteurellales</taxon>
        <taxon>Pasteurellaceae</taxon>
        <taxon>Glaesserella</taxon>
    </lineage>
</organism>
<keyword id="KW-0998">Cell outer membrane</keyword>
<keyword id="KW-0143">Chaperone</keyword>
<keyword id="KW-0449">Lipoprotein</keyword>
<keyword id="KW-0472">Membrane</keyword>
<keyword id="KW-0564">Palmitate</keyword>
<keyword id="KW-0653">Protein transport</keyword>
<keyword id="KW-1185">Reference proteome</keyword>
<keyword id="KW-0732">Signal</keyword>
<keyword id="KW-0813">Transport</keyword>
<proteinExistence type="inferred from homology"/>
<accession>B8F845</accession>